<protein>
    <recommendedName>
        <fullName evidence="1">Photosystem II reaction center protein I</fullName>
        <shortName evidence="1">PSII-I</shortName>
    </recommendedName>
    <alternativeName>
        <fullName evidence="1">PSII 4.8 kDa protein</fullName>
    </alternativeName>
</protein>
<geneLocation type="chloroplast"/>
<proteinExistence type="inferred from homology"/>
<feature type="chain" id="PRO_0000298326" description="Photosystem II reaction center protein I">
    <location>
        <begin position="1"/>
        <end position="36"/>
    </location>
</feature>
<feature type="transmembrane region" description="Helical" evidence="1">
    <location>
        <begin position="4"/>
        <end position="24"/>
    </location>
</feature>
<keyword id="KW-0150">Chloroplast</keyword>
<keyword id="KW-0472">Membrane</keyword>
<keyword id="KW-0602">Photosynthesis</keyword>
<keyword id="KW-0604">Photosystem II</keyword>
<keyword id="KW-0934">Plastid</keyword>
<keyword id="KW-0674">Reaction center</keyword>
<keyword id="KW-0793">Thylakoid</keyword>
<keyword id="KW-0812">Transmembrane</keyword>
<keyword id="KW-1133">Transmembrane helix</keyword>
<gene>
    <name evidence="1" type="primary">psbI</name>
</gene>
<comment type="function">
    <text evidence="1">One of the components of the core complex of photosystem II (PSII), required for its stability and/or assembly. PSII is a light-driven water:plastoquinone oxidoreductase that uses light energy to abstract electrons from H(2)O, generating O(2) and a proton gradient subsequently used for ATP formation. It consists of a core antenna complex that captures photons, and an electron transfer chain that converts photonic excitation into a charge separation.</text>
</comment>
<comment type="subunit">
    <text evidence="1">PSII is composed of 1 copy each of membrane proteins PsbA, PsbB, PsbC, PsbD, PsbE, PsbF, PsbH, PsbI, PsbJ, PsbK, PsbL, PsbM, PsbT, PsbX, PsbY, PsbZ, Psb30/Ycf12, at least 3 peripheral proteins of the oxygen-evolving complex and a large number of cofactors. It forms dimeric complexes.</text>
</comment>
<comment type="subcellular location">
    <subcellularLocation>
        <location evidence="1">Plastid</location>
        <location evidence="1">Chloroplast thylakoid membrane</location>
        <topology evidence="1">Single-pass membrane protein</topology>
    </subcellularLocation>
</comment>
<comment type="similarity">
    <text evidence="1">Belongs to the PsbI family.</text>
</comment>
<reference key="1">
    <citation type="journal article" date="2006" name="BMC Plant Biol.">
        <title>Rapid and accurate pyrosequencing of angiosperm plastid genomes.</title>
        <authorList>
            <person name="Moore M.J."/>
            <person name="Dhingra A."/>
            <person name="Soltis P.S."/>
            <person name="Shaw R."/>
            <person name="Farmerie W.G."/>
            <person name="Folta K.M."/>
            <person name="Soltis D.E."/>
        </authorList>
    </citation>
    <scope>NUCLEOTIDE SEQUENCE [LARGE SCALE GENOMIC DNA]</scope>
</reference>
<sequence>MLTLKLFVYTVVIFFVSLFIFGFLSNDPGRNPGREE</sequence>
<organism>
    <name type="scientific">Platanus occidentalis</name>
    <name type="common">Sycamore</name>
    <name type="synonym">American plane tree</name>
    <dbReference type="NCBI Taxonomy" id="4403"/>
    <lineage>
        <taxon>Eukaryota</taxon>
        <taxon>Viridiplantae</taxon>
        <taxon>Streptophyta</taxon>
        <taxon>Embryophyta</taxon>
        <taxon>Tracheophyta</taxon>
        <taxon>Spermatophyta</taxon>
        <taxon>Magnoliopsida</taxon>
        <taxon>Proteales</taxon>
        <taxon>Platanaceae</taxon>
        <taxon>Platanus</taxon>
    </lineage>
</organism>
<dbReference type="EMBL" id="DQ923116">
    <property type="protein sequence ID" value="ABI49762.1"/>
    <property type="molecule type" value="Genomic_DNA"/>
</dbReference>
<dbReference type="RefSeq" id="YP_740549.1">
    <property type="nucleotide sequence ID" value="NC_008335.1"/>
</dbReference>
<dbReference type="SMR" id="Q09G62"/>
<dbReference type="GeneID" id="4271347"/>
<dbReference type="GO" id="GO:0009535">
    <property type="term" value="C:chloroplast thylakoid membrane"/>
    <property type="evidence" value="ECO:0007669"/>
    <property type="project" value="UniProtKB-SubCell"/>
</dbReference>
<dbReference type="GO" id="GO:0009539">
    <property type="term" value="C:photosystem II reaction center"/>
    <property type="evidence" value="ECO:0007669"/>
    <property type="project" value="InterPro"/>
</dbReference>
<dbReference type="GO" id="GO:0015979">
    <property type="term" value="P:photosynthesis"/>
    <property type="evidence" value="ECO:0007669"/>
    <property type="project" value="UniProtKB-UniRule"/>
</dbReference>
<dbReference type="HAMAP" id="MF_01316">
    <property type="entry name" value="PSII_PsbI"/>
    <property type="match status" value="1"/>
</dbReference>
<dbReference type="InterPro" id="IPR003686">
    <property type="entry name" value="PSII_PsbI"/>
</dbReference>
<dbReference type="InterPro" id="IPR037271">
    <property type="entry name" value="PSII_PsbI_sf"/>
</dbReference>
<dbReference type="NCBIfam" id="NF002735">
    <property type="entry name" value="PRK02655.1"/>
    <property type="match status" value="1"/>
</dbReference>
<dbReference type="PANTHER" id="PTHR35772">
    <property type="entry name" value="PHOTOSYSTEM II REACTION CENTER PROTEIN I"/>
    <property type="match status" value="1"/>
</dbReference>
<dbReference type="PANTHER" id="PTHR35772:SF1">
    <property type="entry name" value="PHOTOSYSTEM II REACTION CENTER PROTEIN I"/>
    <property type="match status" value="1"/>
</dbReference>
<dbReference type="Pfam" id="PF02532">
    <property type="entry name" value="PsbI"/>
    <property type="match status" value="1"/>
</dbReference>
<dbReference type="SUPFAM" id="SSF161041">
    <property type="entry name" value="Photosystem II reaction center protein I, PsbI"/>
    <property type="match status" value="1"/>
</dbReference>
<accession>Q09G62</accession>
<name>PSBI_PLAOC</name>
<evidence type="ECO:0000255" key="1">
    <source>
        <dbReference type="HAMAP-Rule" id="MF_01316"/>
    </source>
</evidence>